<feature type="chain" id="PRO_0000161542" description="tRNA uridine(34) hydroxylase">
    <location>
        <begin position="1"/>
        <end position="257"/>
    </location>
</feature>
<feature type="domain" description="Rhodanese" evidence="1">
    <location>
        <begin position="128"/>
        <end position="222"/>
    </location>
</feature>
<feature type="active site" description="Cysteine persulfide intermediate" evidence="1">
    <location>
        <position position="182"/>
    </location>
</feature>
<gene>
    <name evidence="1" type="primary">trhO</name>
    <name type="ordered locus">PD_1985</name>
</gene>
<name>TRHO_XYLFT</name>
<accession>Q87A46</accession>
<evidence type="ECO:0000255" key="1">
    <source>
        <dbReference type="HAMAP-Rule" id="MF_00469"/>
    </source>
</evidence>
<protein>
    <recommendedName>
        <fullName evidence="1">tRNA uridine(34) hydroxylase</fullName>
        <ecNumber evidence="1">1.14.-.-</ecNumber>
    </recommendedName>
    <alternativeName>
        <fullName evidence="1">tRNA hydroxylation protein O</fullName>
    </alternativeName>
</protein>
<organism>
    <name type="scientific">Xylella fastidiosa (strain Temecula1 / ATCC 700964)</name>
    <dbReference type="NCBI Taxonomy" id="183190"/>
    <lineage>
        <taxon>Bacteria</taxon>
        <taxon>Pseudomonadati</taxon>
        <taxon>Pseudomonadota</taxon>
        <taxon>Gammaproteobacteria</taxon>
        <taxon>Lysobacterales</taxon>
        <taxon>Lysobacteraceae</taxon>
        <taxon>Xylella</taxon>
    </lineage>
</organism>
<sequence length="257" mass="28503">MVIINTAAYHFVSITQPQTLADQIRAHGEIAGLKGTVLIANEGINLFLAGEKEAINAFYAWLCADVRFAALHVKYSVSAYKPFARFKVKVRPEIISFRRGDISPLQVRAPGVSAHTLRDWLRRGCDDNGRRLVMLDARNQQEIAYGTFSGAMTLPITKFTGFPGALAHYRDLLSDATVVSFCTGGIRCEKAVLWMRADGMDNVLQLEGGILGYFEQVGGEGYDGRCFVFDKRVALDPQLRPLYDMRVVASFARSEIS</sequence>
<keyword id="KW-0560">Oxidoreductase</keyword>
<keyword id="KW-1185">Reference proteome</keyword>
<keyword id="KW-0819">tRNA processing</keyword>
<reference key="1">
    <citation type="journal article" date="2003" name="J. Bacteriol.">
        <title>Comparative analyses of the complete genome sequences of Pierce's disease and citrus variegated chlorosis strains of Xylella fastidiosa.</title>
        <authorList>
            <person name="Van Sluys M.A."/>
            <person name="de Oliveira M.C."/>
            <person name="Monteiro-Vitorello C.B."/>
            <person name="Miyaki C.Y."/>
            <person name="Furlan L.R."/>
            <person name="Camargo L.E.A."/>
            <person name="da Silva A.C.R."/>
            <person name="Moon D.H."/>
            <person name="Takita M.A."/>
            <person name="Lemos E.G.M."/>
            <person name="Machado M.A."/>
            <person name="Ferro M.I.T."/>
            <person name="da Silva F.R."/>
            <person name="Goldman M.H.S."/>
            <person name="Goldman G.H."/>
            <person name="Lemos M.V.F."/>
            <person name="El-Dorry H."/>
            <person name="Tsai S.M."/>
            <person name="Carrer H."/>
            <person name="Carraro D.M."/>
            <person name="de Oliveira R.C."/>
            <person name="Nunes L.R."/>
            <person name="Siqueira W.J."/>
            <person name="Coutinho L.L."/>
            <person name="Kimura E.T."/>
            <person name="Ferro E.S."/>
            <person name="Harakava R."/>
            <person name="Kuramae E.E."/>
            <person name="Marino C.L."/>
            <person name="Giglioti E."/>
            <person name="Abreu I.L."/>
            <person name="Alves L.M.C."/>
            <person name="do Amaral A.M."/>
            <person name="Baia G.S."/>
            <person name="Blanco S.R."/>
            <person name="Brito M.S."/>
            <person name="Cannavan F.S."/>
            <person name="Celestino A.V."/>
            <person name="da Cunha A.F."/>
            <person name="Fenille R.C."/>
            <person name="Ferro J.A."/>
            <person name="Formighieri E.F."/>
            <person name="Kishi L.T."/>
            <person name="Leoni S.G."/>
            <person name="Oliveira A.R."/>
            <person name="Rosa V.E. Jr."/>
            <person name="Sassaki F.T."/>
            <person name="Sena J.A.D."/>
            <person name="de Souza A.A."/>
            <person name="Truffi D."/>
            <person name="Tsukumo F."/>
            <person name="Yanai G.M."/>
            <person name="Zaros L.G."/>
            <person name="Civerolo E.L."/>
            <person name="Simpson A.J.G."/>
            <person name="Almeida N.F. Jr."/>
            <person name="Setubal J.C."/>
            <person name="Kitajima J.P."/>
        </authorList>
    </citation>
    <scope>NUCLEOTIDE SEQUENCE [LARGE SCALE GENOMIC DNA]</scope>
    <source>
        <strain>Temecula1 / ATCC 700964</strain>
    </source>
</reference>
<proteinExistence type="inferred from homology"/>
<dbReference type="EC" id="1.14.-.-" evidence="1"/>
<dbReference type="EMBL" id="AE009442">
    <property type="protein sequence ID" value="AAO29814.1"/>
    <property type="molecule type" value="Genomic_DNA"/>
</dbReference>
<dbReference type="RefSeq" id="WP_004087545.1">
    <property type="nucleotide sequence ID" value="NC_004556.1"/>
</dbReference>
<dbReference type="SMR" id="Q87A46"/>
<dbReference type="KEGG" id="xft:PD_1985"/>
<dbReference type="HOGENOM" id="CLU_038878_0_1_6"/>
<dbReference type="Proteomes" id="UP000002516">
    <property type="component" value="Chromosome"/>
</dbReference>
<dbReference type="GO" id="GO:0016705">
    <property type="term" value="F:oxidoreductase activity, acting on paired donors, with incorporation or reduction of molecular oxygen"/>
    <property type="evidence" value="ECO:0007669"/>
    <property type="project" value="UniProtKB-UniRule"/>
</dbReference>
<dbReference type="GO" id="GO:0006400">
    <property type="term" value="P:tRNA modification"/>
    <property type="evidence" value="ECO:0007669"/>
    <property type="project" value="UniProtKB-UniRule"/>
</dbReference>
<dbReference type="Gene3D" id="3.30.70.100">
    <property type="match status" value="1"/>
</dbReference>
<dbReference type="Gene3D" id="3.40.250.10">
    <property type="entry name" value="Rhodanese-like domain"/>
    <property type="match status" value="1"/>
</dbReference>
<dbReference type="HAMAP" id="MF_00469">
    <property type="entry name" value="TrhO"/>
    <property type="match status" value="1"/>
</dbReference>
<dbReference type="InterPro" id="IPR001763">
    <property type="entry name" value="Rhodanese-like_dom"/>
</dbReference>
<dbReference type="InterPro" id="IPR036873">
    <property type="entry name" value="Rhodanese-like_dom_sf"/>
</dbReference>
<dbReference type="InterPro" id="IPR020936">
    <property type="entry name" value="TrhO"/>
</dbReference>
<dbReference type="InterPro" id="IPR040503">
    <property type="entry name" value="TRHO_N"/>
</dbReference>
<dbReference type="NCBIfam" id="NF003703">
    <property type="entry name" value="PRK05320.1"/>
    <property type="match status" value="1"/>
</dbReference>
<dbReference type="PANTHER" id="PTHR43268:SF3">
    <property type="entry name" value="RHODANESE-LIKE DOMAIN-CONTAINING PROTEIN 7-RELATED"/>
    <property type="match status" value="1"/>
</dbReference>
<dbReference type="PANTHER" id="PTHR43268">
    <property type="entry name" value="THIOSULFATE SULFURTRANSFERASE/RHODANESE-LIKE DOMAIN-CONTAINING PROTEIN 2"/>
    <property type="match status" value="1"/>
</dbReference>
<dbReference type="Pfam" id="PF00581">
    <property type="entry name" value="Rhodanese"/>
    <property type="match status" value="1"/>
</dbReference>
<dbReference type="Pfam" id="PF17773">
    <property type="entry name" value="UPF0176_N"/>
    <property type="match status" value="1"/>
</dbReference>
<dbReference type="SMART" id="SM00450">
    <property type="entry name" value="RHOD"/>
    <property type="match status" value="1"/>
</dbReference>
<dbReference type="SUPFAM" id="SSF52821">
    <property type="entry name" value="Rhodanese/Cell cycle control phosphatase"/>
    <property type="match status" value="1"/>
</dbReference>
<dbReference type="PROSITE" id="PS50206">
    <property type="entry name" value="RHODANESE_3"/>
    <property type="match status" value="1"/>
</dbReference>
<comment type="function">
    <text evidence="1">Catalyzes oxygen-dependent 5-hydroxyuridine (ho5U) modification at position 34 in tRNAs.</text>
</comment>
<comment type="catalytic activity">
    <reaction evidence="1">
        <text>uridine(34) in tRNA + AH2 + O2 = 5-hydroxyuridine(34) in tRNA + A + H2O</text>
        <dbReference type="Rhea" id="RHEA:64224"/>
        <dbReference type="Rhea" id="RHEA-COMP:11727"/>
        <dbReference type="Rhea" id="RHEA-COMP:13381"/>
        <dbReference type="ChEBI" id="CHEBI:13193"/>
        <dbReference type="ChEBI" id="CHEBI:15377"/>
        <dbReference type="ChEBI" id="CHEBI:15379"/>
        <dbReference type="ChEBI" id="CHEBI:17499"/>
        <dbReference type="ChEBI" id="CHEBI:65315"/>
        <dbReference type="ChEBI" id="CHEBI:136877"/>
    </reaction>
</comment>
<comment type="similarity">
    <text evidence="1">Belongs to the TrhO family.</text>
</comment>